<proteinExistence type="inferred from homology"/>
<name>PROQ_VIBCH</name>
<gene>
    <name evidence="1" type="primary">proQ</name>
    <name type="ordered locus">VC_1497</name>
</gene>
<dbReference type="EMBL" id="AE003852">
    <property type="protein sequence ID" value="AAF94652.1"/>
    <property type="molecule type" value="Genomic_DNA"/>
</dbReference>
<dbReference type="PIR" id="D82192">
    <property type="entry name" value="D82192"/>
</dbReference>
<dbReference type="RefSeq" id="NP_231138.1">
    <property type="nucleotide sequence ID" value="NC_002505.1"/>
</dbReference>
<dbReference type="RefSeq" id="WP_000432038.1">
    <property type="nucleotide sequence ID" value="NZ_LT906614.1"/>
</dbReference>
<dbReference type="SMR" id="Q9KRY6"/>
<dbReference type="STRING" id="243277.VC_1497"/>
<dbReference type="DNASU" id="2614003"/>
<dbReference type="EnsemblBacteria" id="AAF94652">
    <property type="protein sequence ID" value="AAF94652"/>
    <property type="gene ID" value="VC_1497"/>
</dbReference>
<dbReference type="GeneID" id="88783642"/>
<dbReference type="KEGG" id="vch:VC_1497"/>
<dbReference type="PATRIC" id="fig|243277.26.peg.1424"/>
<dbReference type="eggNOG" id="COG3109">
    <property type="taxonomic scope" value="Bacteria"/>
</dbReference>
<dbReference type="HOGENOM" id="CLU_113254_0_0_6"/>
<dbReference type="Proteomes" id="UP000000584">
    <property type="component" value="Chromosome 1"/>
</dbReference>
<dbReference type="GO" id="GO:0005829">
    <property type="term" value="C:cytosol"/>
    <property type="evidence" value="ECO:0000318"/>
    <property type="project" value="GO_Central"/>
</dbReference>
<dbReference type="GO" id="GO:0033592">
    <property type="term" value="F:RNA strand annealing activity"/>
    <property type="evidence" value="ECO:0000318"/>
    <property type="project" value="GO_Central"/>
</dbReference>
<dbReference type="GO" id="GO:0034057">
    <property type="term" value="F:RNA strand-exchange activity"/>
    <property type="evidence" value="ECO:0000318"/>
    <property type="project" value="GO_Central"/>
</dbReference>
<dbReference type="GO" id="GO:0010608">
    <property type="term" value="P:post-transcriptional regulation of gene expression"/>
    <property type="evidence" value="ECO:0000318"/>
    <property type="project" value="GO_Central"/>
</dbReference>
<dbReference type="FunFam" id="1.10.1710.10:FF:000001">
    <property type="entry name" value="RNA chaperone ProQ"/>
    <property type="match status" value="1"/>
</dbReference>
<dbReference type="Gene3D" id="1.10.1710.10">
    <property type="entry name" value="ProQ/FinO domain"/>
    <property type="match status" value="1"/>
</dbReference>
<dbReference type="HAMAP" id="MF_00749">
    <property type="entry name" value="ProQ"/>
    <property type="match status" value="1"/>
</dbReference>
<dbReference type="InterPro" id="IPR023529">
    <property type="entry name" value="ProQ"/>
</dbReference>
<dbReference type="InterPro" id="IPR016103">
    <property type="entry name" value="ProQ/FinO"/>
</dbReference>
<dbReference type="InterPro" id="IPR036442">
    <property type="entry name" value="ProQ/FinO_sf"/>
</dbReference>
<dbReference type="InterPro" id="IPR035236">
    <property type="entry name" value="ProQ_C"/>
</dbReference>
<dbReference type="NCBIfam" id="NF003434">
    <property type="entry name" value="PRK04950.1"/>
    <property type="match status" value="1"/>
</dbReference>
<dbReference type="PANTHER" id="PTHR38106">
    <property type="entry name" value="RNA CHAPERONE PROQ"/>
    <property type="match status" value="1"/>
</dbReference>
<dbReference type="PANTHER" id="PTHR38106:SF1">
    <property type="entry name" value="RNA CHAPERONE PROQ"/>
    <property type="match status" value="1"/>
</dbReference>
<dbReference type="Pfam" id="PF04352">
    <property type="entry name" value="ProQ"/>
    <property type="match status" value="1"/>
</dbReference>
<dbReference type="Pfam" id="PF17516">
    <property type="entry name" value="ProQ_C"/>
    <property type="match status" value="1"/>
</dbReference>
<dbReference type="SMART" id="SM00945">
    <property type="entry name" value="ProQ"/>
    <property type="match status" value="1"/>
</dbReference>
<dbReference type="SUPFAM" id="SSF48657">
    <property type="entry name" value="FinO-like"/>
    <property type="match status" value="1"/>
</dbReference>
<sequence length="208" mass="23185">MENTEKLKNSKEVIAYIAECFPNCFTLEGEAKPLKIGIFQDLADRLNDDPKVSKTQLRAALRQYTSSWRYLHGVKPGATRVDLDGNPCGELEEQHVEHAQAALAESKARVEARRKEQVKKVREEAKANKPKAKKPQQARRPQNAPKVEKKPVETRALAASELNVGNQVNVNMGKGNMAATIVEVNKEDVRVQLANGLQMVVKAEHLRA</sequence>
<evidence type="ECO:0000255" key="1">
    <source>
        <dbReference type="HAMAP-Rule" id="MF_00749"/>
    </source>
</evidence>
<evidence type="ECO:0000256" key="2">
    <source>
        <dbReference type="SAM" id="MobiDB-lite"/>
    </source>
</evidence>
<keyword id="KW-0143">Chaperone</keyword>
<keyword id="KW-0963">Cytoplasm</keyword>
<keyword id="KW-1185">Reference proteome</keyword>
<keyword id="KW-0694">RNA-binding</keyword>
<feature type="chain" id="PRO_0000214625" description="RNA chaperone ProQ">
    <location>
        <begin position="1"/>
        <end position="208"/>
    </location>
</feature>
<feature type="region of interest" description="Disordered" evidence="2">
    <location>
        <begin position="107"/>
        <end position="152"/>
    </location>
</feature>
<feature type="compositionally biased region" description="Basic and acidic residues" evidence="2">
    <location>
        <begin position="107"/>
        <end position="127"/>
    </location>
</feature>
<feature type="compositionally biased region" description="Basic residues" evidence="2">
    <location>
        <begin position="128"/>
        <end position="137"/>
    </location>
</feature>
<protein>
    <recommendedName>
        <fullName evidence="1">RNA chaperone ProQ</fullName>
    </recommendedName>
</protein>
<organism>
    <name type="scientific">Vibrio cholerae serotype O1 (strain ATCC 39315 / El Tor Inaba N16961)</name>
    <dbReference type="NCBI Taxonomy" id="243277"/>
    <lineage>
        <taxon>Bacteria</taxon>
        <taxon>Pseudomonadati</taxon>
        <taxon>Pseudomonadota</taxon>
        <taxon>Gammaproteobacteria</taxon>
        <taxon>Vibrionales</taxon>
        <taxon>Vibrionaceae</taxon>
        <taxon>Vibrio</taxon>
    </lineage>
</organism>
<accession>Q9KRY6</accession>
<comment type="function">
    <text evidence="1">RNA chaperone with significant RNA binding, RNA strand exchange and RNA duplexing activities.</text>
</comment>
<comment type="subcellular location">
    <subcellularLocation>
        <location evidence="1">Cytoplasm</location>
    </subcellularLocation>
</comment>
<comment type="similarity">
    <text evidence="1">Belongs to the ProQ family.</text>
</comment>
<reference key="1">
    <citation type="journal article" date="2000" name="Nature">
        <title>DNA sequence of both chromosomes of the cholera pathogen Vibrio cholerae.</title>
        <authorList>
            <person name="Heidelberg J.F."/>
            <person name="Eisen J.A."/>
            <person name="Nelson W.C."/>
            <person name="Clayton R.A."/>
            <person name="Gwinn M.L."/>
            <person name="Dodson R.J."/>
            <person name="Haft D.H."/>
            <person name="Hickey E.K."/>
            <person name="Peterson J.D."/>
            <person name="Umayam L.A."/>
            <person name="Gill S.R."/>
            <person name="Nelson K.E."/>
            <person name="Read T.D."/>
            <person name="Tettelin H."/>
            <person name="Richardson D.L."/>
            <person name="Ermolaeva M.D."/>
            <person name="Vamathevan J.J."/>
            <person name="Bass S."/>
            <person name="Qin H."/>
            <person name="Dragoi I."/>
            <person name="Sellers P."/>
            <person name="McDonald L.A."/>
            <person name="Utterback T.R."/>
            <person name="Fleischmann R.D."/>
            <person name="Nierman W.C."/>
            <person name="White O."/>
            <person name="Salzberg S.L."/>
            <person name="Smith H.O."/>
            <person name="Colwell R.R."/>
            <person name="Mekalanos J.J."/>
            <person name="Venter J.C."/>
            <person name="Fraser C.M."/>
        </authorList>
    </citation>
    <scope>NUCLEOTIDE SEQUENCE [LARGE SCALE GENOMIC DNA]</scope>
    <source>
        <strain>ATCC 39315 / El Tor Inaba N16961</strain>
    </source>
</reference>